<evidence type="ECO:0000269" key="1">
    <source>
    </source>
</evidence>
<evidence type="ECO:0000269" key="2">
    <source>
    </source>
</evidence>
<evidence type="ECO:0000269" key="3">
    <source>
    </source>
</evidence>
<evidence type="ECO:0000269" key="4">
    <source>
    </source>
</evidence>
<evidence type="ECO:0000269" key="5">
    <source>
    </source>
</evidence>
<evidence type="ECO:0000269" key="6">
    <source>
    </source>
</evidence>
<evidence type="ECO:0000269" key="7">
    <source>
    </source>
</evidence>
<evidence type="ECO:0000303" key="8">
    <source>
    </source>
</evidence>
<evidence type="ECO:0000303" key="9">
    <source>
    </source>
</evidence>
<evidence type="ECO:0000303" key="10">
    <source>
    </source>
</evidence>
<evidence type="ECO:0000305" key="11"/>
<evidence type="ECO:0000305" key="12">
    <source>
    </source>
</evidence>
<evidence type="ECO:0007744" key="13">
    <source>
        <dbReference type="PDB" id="1J3U"/>
    </source>
</evidence>
<evidence type="ECO:0007744" key="14">
    <source>
        <dbReference type="PDB" id="3R6Q"/>
    </source>
</evidence>
<evidence type="ECO:0007744" key="15">
    <source>
        <dbReference type="PDB" id="3R6V"/>
    </source>
</evidence>
<evidence type="ECO:0007744" key="16">
    <source>
        <dbReference type="PDB" id="3R6Y"/>
    </source>
</evidence>
<evidence type="ECO:0007829" key="17">
    <source>
        <dbReference type="PDB" id="1J3U"/>
    </source>
</evidence>
<evidence type="ECO:0007829" key="18">
    <source>
        <dbReference type="PDB" id="3R6Q"/>
    </source>
</evidence>
<evidence type="ECO:0007829" key="19">
    <source>
        <dbReference type="PDB" id="3R6V"/>
    </source>
</evidence>
<accession>Q9LCC6</accession>
<proteinExistence type="evidence at protein level"/>
<gene>
    <name evidence="9" type="primary">aspB</name>
</gene>
<organism>
    <name type="scientific">Bacillus sp</name>
    <dbReference type="NCBI Taxonomy" id="1409"/>
    <lineage>
        <taxon>Bacteria</taxon>
        <taxon>Bacillati</taxon>
        <taxon>Bacillota</taxon>
        <taxon>Bacilli</taxon>
        <taxon>Bacillales</taxon>
        <taxon>Bacillaceae</taxon>
        <taxon>Bacillus</taxon>
    </lineage>
</organism>
<keyword id="KW-0002">3D-structure</keyword>
<keyword id="KW-0903">Direct protein sequencing</keyword>
<keyword id="KW-0456">Lyase</keyword>
<dbReference type="EC" id="4.3.1.1" evidence="1 2 4 5"/>
<dbReference type="EMBL" id="AB028242">
    <property type="protein sequence ID" value="BAA93044.1"/>
    <property type="molecule type" value="Genomic_DNA"/>
</dbReference>
<dbReference type="PDB" id="1J3U">
    <property type="method" value="X-ray"/>
    <property type="resolution" value="2.50 A"/>
    <property type="chains" value="A/B=1-468"/>
</dbReference>
<dbReference type="PDB" id="3R6Q">
    <property type="method" value="X-ray"/>
    <property type="resolution" value="2.40 A"/>
    <property type="chains" value="A/B/C/D/E/F/G/H=1-468"/>
</dbReference>
<dbReference type="PDB" id="3R6V">
    <property type="method" value="X-ray"/>
    <property type="resolution" value="2.60 A"/>
    <property type="chains" value="A/B/C/D/E/F/G/H=1-468"/>
</dbReference>
<dbReference type="PDB" id="3R6Y">
    <property type="method" value="X-ray"/>
    <property type="resolution" value="3.00 A"/>
    <property type="chains" value="A/B/C/D/E/F/G/H=1-401"/>
</dbReference>
<dbReference type="PDB" id="8RJ0">
    <property type="method" value="X-ray"/>
    <property type="resolution" value="1.90 A"/>
    <property type="chains" value="A/B=1-468"/>
</dbReference>
<dbReference type="PDBsum" id="1J3U"/>
<dbReference type="PDBsum" id="3R6Q"/>
<dbReference type="PDBsum" id="3R6V"/>
<dbReference type="PDBsum" id="3R6Y"/>
<dbReference type="PDBsum" id="8RJ0"/>
<dbReference type="SMR" id="Q9LCC6"/>
<dbReference type="EvolutionaryTrace" id="Q9LCC6"/>
<dbReference type="GO" id="GO:0005829">
    <property type="term" value="C:cytosol"/>
    <property type="evidence" value="ECO:0007669"/>
    <property type="project" value="TreeGrafter"/>
</dbReference>
<dbReference type="GO" id="GO:0008797">
    <property type="term" value="F:aspartate ammonia-lyase activity"/>
    <property type="evidence" value="ECO:0007669"/>
    <property type="project" value="UniProtKB-EC"/>
</dbReference>
<dbReference type="GO" id="GO:0006531">
    <property type="term" value="P:aspartate metabolic process"/>
    <property type="evidence" value="ECO:0007669"/>
    <property type="project" value="InterPro"/>
</dbReference>
<dbReference type="GO" id="GO:0006099">
    <property type="term" value="P:tricarboxylic acid cycle"/>
    <property type="evidence" value="ECO:0007669"/>
    <property type="project" value="InterPro"/>
</dbReference>
<dbReference type="CDD" id="cd01357">
    <property type="entry name" value="Aspartase"/>
    <property type="match status" value="1"/>
</dbReference>
<dbReference type="FunFam" id="1.10.40.30:FF:000002">
    <property type="entry name" value="Fumarate hydratase class II"/>
    <property type="match status" value="1"/>
</dbReference>
<dbReference type="FunFam" id="1.10.275.10:FF:000001">
    <property type="entry name" value="Fumarate hydratase, mitochondrial"/>
    <property type="match status" value="1"/>
</dbReference>
<dbReference type="FunFam" id="1.20.200.10:FF:000001">
    <property type="entry name" value="Fumarate hydratase, mitochondrial"/>
    <property type="match status" value="1"/>
</dbReference>
<dbReference type="Gene3D" id="1.10.40.30">
    <property type="entry name" value="Fumarase/aspartase (C-terminal domain)"/>
    <property type="match status" value="1"/>
</dbReference>
<dbReference type="Gene3D" id="1.20.200.10">
    <property type="entry name" value="Fumarase/aspartase (Central domain)"/>
    <property type="match status" value="1"/>
</dbReference>
<dbReference type="Gene3D" id="1.10.275.10">
    <property type="entry name" value="Fumarase/aspartase (N-terminal domain)"/>
    <property type="match status" value="1"/>
</dbReference>
<dbReference type="InterPro" id="IPR004708">
    <property type="entry name" value="ApsA"/>
</dbReference>
<dbReference type="InterPro" id="IPR051546">
    <property type="entry name" value="Aspartate_Ammonia-Lyase"/>
</dbReference>
<dbReference type="InterPro" id="IPR024083">
    <property type="entry name" value="Fumarase/histidase_N"/>
</dbReference>
<dbReference type="InterPro" id="IPR018951">
    <property type="entry name" value="Fumarase_C_C"/>
</dbReference>
<dbReference type="InterPro" id="IPR020557">
    <property type="entry name" value="Fumarate_lyase_CS"/>
</dbReference>
<dbReference type="InterPro" id="IPR000362">
    <property type="entry name" value="Fumarate_lyase_fam"/>
</dbReference>
<dbReference type="InterPro" id="IPR022761">
    <property type="entry name" value="Fumarate_lyase_N"/>
</dbReference>
<dbReference type="InterPro" id="IPR008948">
    <property type="entry name" value="L-Aspartase-like"/>
</dbReference>
<dbReference type="NCBIfam" id="TIGR00839">
    <property type="entry name" value="aspA"/>
    <property type="match status" value="1"/>
</dbReference>
<dbReference type="NCBIfam" id="NF008909">
    <property type="entry name" value="PRK12273.1"/>
    <property type="match status" value="1"/>
</dbReference>
<dbReference type="PANTHER" id="PTHR42696">
    <property type="entry name" value="ASPARTATE AMMONIA-LYASE"/>
    <property type="match status" value="1"/>
</dbReference>
<dbReference type="PANTHER" id="PTHR42696:SF2">
    <property type="entry name" value="ASPARTATE AMMONIA-LYASE"/>
    <property type="match status" value="1"/>
</dbReference>
<dbReference type="Pfam" id="PF10415">
    <property type="entry name" value="FumaraseC_C"/>
    <property type="match status" value="1"/>
</dbReference>
<dbReference type="Pfam" id="PF00206">
    <property type="entry name" value="Lyase_1"/>
    <property type="match status" value="1"/>
</dbReference>
<dbReference type="PRINTS" id="PR00145">
    <property type="entry name" value="ARGSUCLYASE"/>
</dbReference>
<dbReference type="PRINTS" id="PR00149">
    <property type="entry name" value="FUMRATELYASE"/>
</dbReference>
<dbReference type="SUPFAM" id="SSF48557">
    <property type="entry name" value="L-aspartase-like"/>
    <property type="match status" value="1"/>
</dbReference>
<dbReference type="PROSITE" id="PS00163">
    <property type="entry name" value="FUMARATE_LYASES"/>
    <property type="match status" value="1"/>
</dbReference>
<sequence length="468" mass="51630">MNTDVRIEKDFLGEKEIPKDAYYGVQTIRATENFPITGYRIHPELIKSLGIVKKSAALANMEVGLLDKEVGQYIVKAADEVIEGKWNDQFIVDPIQGGAGTSINMNANEVIANRALELMGEEKGNYSKISPNSHVNMSQSTNDAFPTATHIAVLSLLNQLIETTKYMQQEFMKKADEFAGVIKMGRTHLQDAVPILLGQEFEAYARVIARDIERIANTRNNLYDINMGATAVGTGLNADPEYISIVTEHLAKFSGHPLRSAQHLVDATQNTDCYTEVSSALKVCMINMSKIANDLRLMASGPRAGLSEIVLPARQPGSSIMPGKVNPVMPEVMNQVAFQVFGNDLTITSASEAGQFELNVMEPVLFFNLIQSISIMTNVFKSFTENCLKGIKANEERMKEYVEKSIGIITAINPHVGYETAAKLAREAYLTGESIRELCIKYGVLTEEQLNEILNPYEMTHPGIAGRK</sequence>
<comment type="function">
    <text evidence="1 2 4 5">Catalyzes the reversible conversion of L-aspartate to fumarate and ammonia (PubMed:10334861, PubMed:10712618, PubMed:18844200, PubMed:19490103). Is highly specific for L-aspartate in the deamination reaction, and cannot use alternative substrates such as D-aspartic acid, alpha-methyl-DL-aspartic acid, beta-methyl-DL-aspartic acid or L-glutamate (PubMed:18844200). In the reverse reaction, alternative nucleophiles (such as hydroxylamine, hydrazine, methoxylamine and methylamine) can replace ammonia in vitro, leading to the formation of N-substituted aspartic acid derivatives (PubMed:18844200).</text>
</comment>
<comment type="catalytic activity">
    <reaction evidence="1 2 4 5">
        <text>L-aspartate = fumarate + NH4(+)</text>
        <dbReference type="Rhea" id="RHEA:16601"/>
        <dbReference type="ChEBI" id="CHEBI:28938"/>
        <dbReference type="ChEBI" id="CHEBI:29806"/>
        <dbReference type="ChEBI" id="CHEBI:29991"/>
        <dbReference type="EC" id="4.3.1.1"/>
    </reaction>
</comment>
<comment type="activity regulation">
    <text evidence="1">Unlike E.coli aspartase, the enzyme is not activated by the presence of divalent metal ions at alkaline pH.</text>
</comment>
<comment type="biophysicochemical properties">
    <kinetics>
        <KM evidence="1">28.5 mM for L-aspartate (at 30 degrees Celsius and pH 8.5)</KM>
        <KM evidence="1">32 mM for L-aspartate (at 55 degrees Celsius and pH 7.8)</KM>
        <KM evidence="4">15 mM for L-aspartate (for the recombinant His6-tagged enzyme)</KM>
        <KM evidence="4">85 mM for NH(3) (for the recombinant His6-tagged enzyme)</KM>
        <Vmax evidence="1">700.0 umol/min/mg enzyme (at 30 degrees Celsius and pH 8.5)</Vmax>
        <Vmax evidence="1">2200.0 umol/min/mg enzyme (at 55 degrees Celsius and pH 7.8)</Vmax>
        <text evidence="4">kcat is 40 sec(-1) with L-aspartate as substrate (for the recombinant His6-tagged enzyme) (PubMed:18844200). kcat is 89 sec(-1) with NH(3) as substrate (for the recombinant His6-tagged enzyme) (PubMed:18844200).</text>
    </kinetics>
    <phDependence>
        <text evidence="1 2 7">Optimum pH is 8.5 at 30 degrees Celsius and 7.5 at 60 degrees Celsius (PubMed:10334861, PubMed:10712618). Free AspB is very stable between pH 6 and 9, keeping over 80% of activity after 24 hours, and much less stable at pH 5 and 10 (PubMed:22527030).</text>
    </phDependence>
    <temperatureDependence>
        <text evidence="1">Optimum temperature is 65 degrees Celsius at pH 7.5 (PubMed:10334861). Thermostable (PubMed:10334861). Retains 80% of its activity after a 60 minutes incubation at 55 degrees Celsius (PubMed:10334861).</text>
    </temperatureDependence>
</comment>
<comment type="subunit">
    <text evidence="1 2 3 6 7">Homotetramer.</text>
</comment>
<comment type="domain">
    <text evidence="3 6">Each subunit is composed of three domains: the N-terminal large domain, the central helix domain and the C-terminal small domain (PubMed:12706722, PubMed:21661762). Substrate binding induces a large conformational change in the SS loop from an open conformation to one that closes over the active site (PubMed:21661762). The C-terminal domain is essential for activity (PubMed:21661762). The small C-terminal domain could play an important role in controlling the conformation of the SS loop and, therefore, in regulating the catalytic activity (PubMed:21661762).</text>
</comment>
<comment type="biotechnology">
    <text evidence="1 4 7 10">Aspartase is mainly used in the synthesis of L-aspartate, which is used in the pharmaceutical industry, parental nutrition, food additives, and is one of the principal ingredients for the manufacture of aspartame, a low-calorie sweetener (PubMed:22527030). Aspartase from Bacillus sp. YM55-1 has several characteristics ideal for application in industrial processes: high specific activity, relatively high thermostability and no cofactor dependence (PubMed:10334861, PubMed:22527030). It is notably an attractive enzyme for the enantioselective synthesis of N-substituted aspartic acids, which are interesting building blocks for peptide and pharmaceutical synthesis as well as for peptidomimetics (PubMed:18844200). Several immobilization methods have been investigated to improve the stability of the enzyme and ensure the reusability of the biocatalyst, allowing increased productivity and reducing the high cost associated with the production and purification of the enzyme (PubMed:22527030).</text>
</comment>
<comment type="similarity">
    <text evidence="11">Belongs to the class-II fumarase/aspartase family. Aspartase subfamily.</text>
</comment>
<protein>
    <recommendedName>
        <fullName evidence="8">Aspartate ammonia-lyase</fullName>
        <shortName evidence="8">Aspartase</shortName>
        <ecNumber evidence="1 2 4 5">4.3.1.1</ecNumber>
    </recommendedName>
</protein>
<reference key="1">
    <citation type="journal article" date="2000" name="Eur. J. Biochem.">
        <title>Cloning and over-expression of thermostable Bacillus sp. YM55-1 aspartase and site-directed mutagenesis for probing a catalytic residue.</title>
        <authorList>
            <person name="Kawata Y."/>
            <person name="Tamura K."/>
            <person name="Kawamura M."/>
            <person name="Ikei K."/>
            <person name="Mizobata T."/>
            <person name="Nagai J."/>
            <person name="Fujita M."/>
            <person name="Yano S."/>
            <person name="Tokushige M."/>
            <person name="Yumoto N."/>
        </authorList>
    </citation>
    <scope>NUCLEOTIDE SEQUENCE [GENOMIC DNA]</scope>
    <scope>FUNCTION</scope>
    <scope>CATALYTIC ACTIVITY</scope>
    <scope>BIOPHYSICOCHEMICAL PROPERTIES</scope>
    <scope>SUBUNIT</scope>
    <scope>MUTAGENESIS OF HIS-134 AND LYS-183</scope>
    <source>
        <strain>YM55-1</strain>
    </source>
</reference>
<reference key="2">
    <citation type="journal article" date="1999" name="Arch. Biochem. Biophys.">
        <title>Purification and characterization of thermostable aspartase from Bacillus sp. YM55-1.</title>
        <authorList>
            <person name="Kawata Y."/>
            <person name="Tamura K."/>
            <person name="Yano S."/>
            <person name="Mizobata T."/>
            <person name="Nagai J."/>
            <person name="Esaki N."/>
            <person name="Soda K."/>
            <person name="Tokushige M."/>
            <person name="Yumoto N."/>
        </authorList>
    </citation>
    <scope>PROTEIN SEQUENCE OF 1-40</scope>
    <scope>FUNCTION</scope>
    <scope>CATALYTIC ACTIVITY</scope>
    <scope>ACTIVITY REGULATION</scope>
    <scope>BIOPHYSICOCHEMICAL PROPERTIES</scope>
    <scope>SUBUNIT</scope>
    <scope>BIOTECHNOLOGY</scope>
    <source>
        <strain>YM55-1</strain>
    </source>
</reference>
<reference key="3">
    <citation type="journal article" date="2008" name="Chemistry">
        <title>Biocatalytic enantioselective synthesis of N-substituted aspartic acids by aspartate ammonia lyase.</title>
        <authorList>
            <person name="Weiner B."/>
            <person name="Poelarends G.J."/>
            <person name="Janssen D.B."/>
            <person name="Feringa B.L."/>
        </authorList>
    </citation>
    <scope>FUNCTION</scope>
    <scope>CATALYTIC ACTIVITY</scope>
    <scope>BIOPHYSICOCHEMICAL PROPERTIES</scope>
    <scope>BIOTECHNOLOGY</scope>
    <source>
        <strain>YM55-1</strain>
    </source>
</reference>
<reference key="4">
    <citation type="journal article" date="2009" name="FEBS J.">
        <title>Site-directed mutagenesis, kinetic and inhibition studies of aspartate ammonia lyase from Bacillus sp. YM55-1.</title>
        <authorList>
            <person name="Puthan Veetil V."/>
            <person name="Raj H."/>
            <person name="Quax W.J."/>
            <person name="Janssen D.B."/>
            <person name="Poelarends G.J."/>
        </authorList>
    </citation>
    <scope>FUNCTION</scope>
    <scope>CATALYTIC ACTIVITY</scope>
    <scope>MUTAGENESIS OF THR-101; SER-140; THR-141; ASN-142; THR-187; HIS-188; LYS-324 AND ASN-326</scope>
    <source>
        <strain>YM55-1</strain>
    </source>
</reference>
<reference key="5">
    <citation type="journal article" date="2012" name="Bioprocess Biosyst. Eng.">
        <title>Immobilized L-aspartate ammonia-lyase from Bacillus sp. YM55-1 as biocatalyst for highly concentrated L-aspartate synthesis.</title>
        <authorList>
            <person name="Cardenas-Fernandez M."/>
            <person name="Lopez C."/>
            <person name="Alvaro G."/>
            <person name="Lopez-Santin J."/>
        </authorList>
    </citation>
    <scope>BIOPHYSICOCHEMICAL PROPERTIES</scope>
    <scope>SUBUNIT</scope>
    <scope>BIOTECHNOLOGY</scope>
    <source>
        <strain>YM55-1</strain>
    </source>
</reference>
<reference evidence="13" key="6">
    <citation type="journal article" date="2003" name="J. Mol. Biol.">
        <title>Crystal structure of thermostable aspartase from Bacillus sp. YM55-1: structure-based exploration of functional sites in the aspartase family.</title>
        <authorList>
            <person name="Fujii T."/>
            <person name="Sakai H."/>
            <person name="Kawata Y."/>
            <person name="Hata Y."/>
        </authorList>
    </citation>
    <scope>X-RAY CRYSTALLOGRAPHY (2.50 ANGSTROMS)</scope>
    <scope>SUBUNIT</scope>
    <scope>DOMAIN</scope>
    <source>
        <strain>YM55-1</strain>
    </source>
</reference>
<reference evidence="14 15 16" key="7">
    <citation type="journal article" date="2011" name="Biochemistry">
        <title>Structural basis for the catalytic mechanism of aspartate ammonia lyase.</title>
        <authorList>
            <person name="Fibriansah G."/>
            <person name="Veetil V.P."/>
            <person name="Poelarends G.J."/>
            <person name="Thunnissen A.M."/>
        </authorList>
    </citation>
    <scope>X-RAY CRYSTALLOGRAPHY (2.40 ANGSTROMS) OF APOENZYME AND IN COMPLEX WITH ASPARTATE</scope>
    <scope>SUBUNIT</scope>
    <scope>DOMAIN</scope>
    <scope>ACTIVE SITE</scope>
    <scope>MUTAGENESIS OF SER-318; SER-319; ILE-320; MET-321 AND PRO-322</scope>
    <source>
        <strain>YM55-1</strain>
    </source>
</reference>
<feature type="chain" id="PRO_0000460387" description="Aspartate ammonia-lyase">
    <location>
        <begin position="1"/>
        <end position="468"/>
    </location>
</feature>
<feature type="region of interest" description="SS loop" evidence="12">
    <location>
        <begin position="317"/>
        <end position="326"/>
    </location>
</feature>
<feature type="active site" description="Proton acceptor" evidence="12">
    <location>
        <position position="318"/>
    </location>
</feature>
<feature type="binding site" evidence="6 15">
    <location>
        <position position="101"/>
    </location>
    <ligand>
        <name>L-aspartate</name>
        <dbReference type="ChEBI" id="CHEBI:29991"/>
    </ligand>
</feature>
<feature type="binding site" evidence="6 15">
    <location>
        <position position="140"/>
    </location>
    <ligand>
        <name>L-aspartate</name>
        <dbReference type="ChEBI" id="CHEBI:29991"/>
    </ligand>
</feature>
<feature type="binding site" evidence="6 15">
    <location>
        <position position="141"/>
    </location>
    <ligand>
        <name>L-aspartate</name>
        <dbReference type="ChEBI" id="CHEBI:29991"/>
    </ligand>
</feature>
<feature type="binding site" evidence="6 15">
    <location>
        <position position="142"/>
    </location>
    <ligand>
        <name>L-aspartate</name>
        <dbReference type="ChEBI" id="CHEBI:29991"/>
    </ligand>
</feature>
<feature type="binding site" evidence="6 15">
    <location>
        <position position="187"/>
    </location>
    <ligand>
        <name>L-aspartate</name>
        <dbReference type="ChEBI" id="CHEBI:29991"/>
    </ligand>
</feature>
<feature type="binding site" evidence="6 15">
    <location>
        <position position="188"/>
    </location>
    <ligand>
        <name>L-aspartate</name>
        <dbReference type="ChEBI" id="CHEBI:29991"/>
    </ligand>
</feature>
<feature type="binding site" evidence="6 15">
    <location>
        <position position="319"/>
    </location>
    <ligand>
        <name>L-aspartate</name>
        <dbReference type="ChEBI" id="CHEBI:29991"/>
    </ligand>
</feature>
<feature type="binding site" evidence="6 15">
    <location>
        <position position="324"/>
    </location>
    <ligand>
        <name>L-aspartate</name>
        <dbReference type="ChEBI" id="CHEBI:29991"/>
    </ligand>
</feature>
<feature type="mutagenesis site" description="7100-fold decrease in catalytic efficiency. Does not result in any major conformational changes." evidence="5">
    <original>T</original>
    <variation>A</variation>
    <location>
        <position position="101"/>
    </location>
</feature>
<feature type="mutagenesis site" description="80-fold decrease in catalytic efficiency." evidence="5">
    <original>T</original>
    <variation>S</variation>
    <location>
        <position position="101"/>
    </location>
</feature>
<feature type="mutagenesis site" description="Retains full activity. Shows a slightly stronger affinity for L-aspartate. Does not affect tertiary structure." evidence="2">
    <original>H</original>
    <variation>A</variation>
    <location>
        <position position="134"/>
    </location>
</feature>
<feature type="mutagenesis site" description="27-fold decrease in catalytic efficiency. Does not result in any major conformational changes." evidence="5">
    <original>S</original>
    <variation>A</variation>
    <location>
        <position position="140"/>
    </location>
</feature>
<feature type="mutagenesis site" description="Loss of activity." evidence="5">
    <original>S</original>
    <variation>K</variation>
    <variation>R</variation>
    <location>
        <position position="140"/>
    </location>
</feature>
<feature type="mutagenesis site" description="15-fold decrease in catalytic efficiency. Does not result in any major conformational changes." evidence="5">
    <original>T</original>
    <variation>A</variation>
    <location>
        <position position="141"/>
    </location>
</feature>
<feature type="mutagenesis site" description="40000-fold decrease in catalytic efficiency." evidence="5">
    <original>T</original>
    <variation>K</variation>
    <location>
        <position position="141"/>
    </location>
</feature>
<feature type="mutagenesis site" description="Loss of activity." evidence="5">
    <original>T</original>
    <variation>V</variation>
    <variation>R</variation>
    <location>
        <position position="141"/>
    </location>
</feature>
<feature type="mutagenesis site" description="Loss of activity. Does not result in any major conformational changes." evidence="5">
    <original>N</original>
    <variation>A</variation>
    <location>
        <position position="142"/>
    </location>
</feature>
<feature type="mutagenesis site" description="3000-fold decrease in catalytic efficiency." evidence="5">
    <original>N</original>
    <variation>Q</variation>
    <location>
        <position position="142"/>
    </location>
</feature>
<feature type="mutagenesis site" description="Loss of activity. Does not affect tertiary structure." evidence="2">
    <original>K</original>
    <variation>A</variation>
    <location>
        <position position="183"/>
    </location>
</feature>
<feature type="mutagenesis site" description="6280-fold decrease in catalytic efficiency. Does not result in any major conformational changes." evidence="5">
    <original>T</original>
    <variation>A</variation>
    <location>
        <position position="187"/>
    </location>
</feature>
<feature type="mutagenesis site" description="2.3-fold decrease in catalytic efficiency." evidence="5">
    <original>T</original>
    <variation>S</variation>
    <location>
        <position position="187"/>
    </location>
</feature>
<feature type="mutagenesis site" description="100-fold decrease in catalytic efficiency. Does not result in any major conformational changes." evidence="5">
    <original>H</original>
    <variation>A</variation>
    <location>
        <position position="188"/>
    </location>
</feature>
<feature type="mutagenesis site" description="Loss of activity." evidence="5">
    <original>H</original>
    <variation>K</variation>
    <variation>Q</variation>
    <variation>R</variation>
    <location>
        <position position="188"/>
    </location>
</feature>
<feature type="mutagenesis site" description="Loss of activity." evidence="6">
    <original>S</original>
    <variation>A</variation>
    <location>
        <position position="318"/>
    </location>
</feature>
<feature type="mutagenesis site" description="Almost no change in catalytic efficiency." evidence="6">
    <original>S</original>
    <variation>A</variation>
    <location>
        <position position="319"/>
    </location>
</feature>
<feature type="mutagenesis site" description="50-fold decrease in catalytic efficiency." evidence="6">
    <original>I</original>
    <variation>A</variation>
    <location>
        <position position="320"/>
    </location>
</feature>
<feature type="mutagenesis site" description="338-fold decrease in catalytic efficiency." evidence="6">
    <original>M</original>
    <variation>A</variation>
    <location>
        <position position="321"/>
    </location>
</feature>
<feature type="mutagenesis site" description="Almost no change in catalytic efficiency." evidence="6">
    <original>P</original>
    <variation>A</variation>
    <location>
        <position position="322"/>
    </location>
</feature>
<feature type="mutagenesis site" description="Loss of activity. Does not result in any major conformational changes." evidence="5">
    <original>K</original>
    <variation>A</variation>
    <location>
        <position position="324"/>
    </location>
</feature>
<feature type="mutagenesis site" description="Loss of activity." evidence="5">
    <original>K</original>
    <variation>D</variation>
    <variation>H</variation>
    <variation>R</variation>
    <variation>S</variation>
    <variation>V</variation>
    <location>
        <position position="324"/>
    </location>
</feature>
<feature type="mutagenesis site" description="22500-fold decrease in catalytic efficiency. Does not result in any major conformational changes." evidence="5">
    <original>N</original>
    <variation>A</variation>
    <location>
        <position position="326"/>
    </location>
</feature>
<feature type="mutagenesis site" description="168750-fold decrease in catalytic efficiency." evidence="5">
    <original>N</original>
    <variation>Q</variation>
    <location>
        <position position="326"/>
    </location>
</feature>
<feature type="strand" evidence="18">
    <location>
        <begin position="6"/>
        <end position="10"/>
    </location>
</feature>
<feature type="strand" evidence="18">
    <location>
        <begin position="13"/>
        <end position="17"/>
    </location>
</feature>
<feature type="helix" evidence="18">
    <location>
        <begin position="25"/>
        <end position="33"/>
    </location>
</feature>
<feature type="helix" evidence="18">
    <location>
        <begin position="43"/>
        <end position="62"/>
    </location>
</feature>
<feature type="helix" evidence="18">
    <location>
        <begin position="68"/>
        <end position="82"/>
    </location>
</feature>
<feature type="turn" evidence="18">
    <location>
        <begin position="83"/>
        <end position="86"/>
    </location>
</feature>
<feature type="helix" evidence="18">
    <location>
        <begin position="87"/>
        <end position="89"/>
    </location>
</feature>
<feature type="helix" evidence="17">
    <location>
        <begin position="98"/>
        <end position="100"/>
    </location>
</feature>
<feature type="helix" evidence="18">
    <location>
        <begin position="101"/>
        <end position="118"/>
    </location>
</feature>
<feature type="turn" evidence="18">
    <location>
        <begin position="126"/>
        <end position="128"/>
    </location>
</feature>
<feature type="helix" evidence="18">
    <location>
        <begin position="131"/>
        <end position="135"/>
    </location>
</feature>
<feature type="turn" evidence="18">
    <location>
        <begin position="136"/>
        <end position="138"/>
    </location>
</feature>
<feature type="helix" evidence="18">
    <location>
        <begin position="141"/>
        <end position="177"/>
    </location>
</feature>
<feature type="turn" evidence="18">
    <location>
        <begin position="178"/>
        <end position="180"/>
    </location>
</feature>
<feature type="strand" evidence="18">
    <location>
        <begin position="182"/>
        <end position="187"/>
    </location>
</feature>
<feature type="strand" evidence="18">
    <location>
        <begin position="190"/>
        <end position="196"/>
    </location>
</feature>
<feature type="helix" evidence="18">
    <location>
        <begin position="197"/>
        <end position="217"/>
    </location>
</feature>
<feature type="helix" evidence="18">
    <location>
        <begin position="219"/>
        <end position="222"/>
    </location>
</feature>
<feature type="strand" evidence="17">
    <location>
        <begin position="223"/>
        <end position="225"/>
    </location>
</feature>
<feature type="turn" evidence="18">
    <location>
        <begin position="230"/>
        <end position="232"/>
    </location>
</feature>
<feature type="helix" evidence="18">
    <location>
        <begin position="240"/>
        <end position="254"/>
    </location>
</feature>
<feature type="helix" evidence="18">
    <location>
        <begin position="264"/>
        <end position="269"/>
    </location>
</feature>
<feature type="helix" evidence="18">
    <location>
        <begin position="272"/>
        <end position="299"/>
    </location>
</feature>
<feature type="strand" evidence="18">
    <location>
        <begin position="301"/>
        <end position="305"/>
    </location>
</feature>
<feature type="strand" evidence="19">
    <location>
        <begin position="319"/>
        <end position="321"/>
    </location>
</feature>
<feature type="helix" evidence="18">
    <location>
        <begin position="328"/>
        <end position="352"/>
    </location>
</feature>
<feature type="helix" evidence="18">
    <location>
        <begin position="362"/>
        <end position="386"/>
    </location>
</feature>
<feature type="helix" evidence="18">
    <location>
        <begin position="388"/>
        <end position="390"/>
    </location>
</feature>
<feature type="helix" evidence="18">
    <location>
        <begin position="395"/>
        <end position="403"/>
    </location>
</feature>
<feature type="helix" evidence="18">
    <location>
        <begin position="409"/>
        <end position="430"/>
    </location>
</feature>
<feature type="helix" evidence="18">
    <location>
        <begin position="436"/>
        <end position="439"/>
    </location>
</feature>
<feature type="turn" evidence="18">
    <location>
        <begin position="440"/>
        <end position="443"/>
    </location>
</feature>
<feature type="helix" evidence="18">
    <location>
        <begin position="447"/>
        <end position="453"/>
    </location>
</feature>
<feature type="helix" evidence="18">
    <location>
        <begin position="456"/>
        <end position="459"/>
    </location>
</feature>
<name>ASPA_BACSP</name>